<proteinExistence type="predicted"/>
<name>YMA6_PODAN</name>
<dbReference type="EMBL" id="X55026">
    <property type="protein sequence ID" value="CAA38814.1"/>
    <property type="molecule type" value="Genomic_DNA"/>
</dbReference>
<dbReference type="EMBL" id="X15602">
    <property type="protein sequence ID" value="CAA33626.1"/>
    <property type="molecule type" value="Genomic_DNA"/>
</dbReference>
<dbReference type="PIR" id="S05655">
    <property type="entry name" value="S05655"/>
</dbReference>
<dbReference type="RefSeq" id="NP_074917.1">
    <property type="nucleotide sequence ID" value="NC_001329.3"/>
</dbReference>
<dbReference type="SMR" id="P15562"/>
<dbReference type="GeneID" id="802413"/>
<dbReference type="KEGG" id="pan:PoanfMp09"/>
<dbReference type="InParanoid" id="P15562"/>
<dbReference type="Proteomes" id="UP000001197">
    <property type="component" value="Mitochondrion"/>
</dbReference>
<dbReference type="GO" id="GO:0005739">
    <property type="term" value="C:mitochondrion"/>
    <property type="evidence" value="ECO:0007669"/>
    <property type="project" value="UniProtKB-SubCell"/>
</dbReference>
<keyword id="KW-0496">Mitochondrion</keyword>
<keyword id="KW-1185">Reference proteome</keyword>
<organism>
    <name type="scientific">Podospora anserina (strain S / ATCC MYA-4624 / DSM 980 / FGSC 10383)</name>
    <name type="common">Pleurage anserina</name>
    <dbReference type="NCBI Taxonomy" id="515849"/>
    <lineage>
        <taxon>Eukaryota</taxon>
        <taxon>Fungi</taxon>
        <taxon>Dikarya</taxon>
        <taxon>Ascomycota</taxon>
        <taxon>Pezizomycotina</taxon>
        <taxon>Sordariomycetes</taxon>
        <taxon>Sordariomycetidae</taxon>
        <taxon>Sordariales</taxon>
        <taxon>Podosporaceae</taxon>
        <taxon>Podospora</taxon>
        <taxon>Podospora anserina</taxon>
    </lineage>
</organism>
<protein>
    <recommendedName>
        <fullName>Uncharacterized 34.3 kDa protein in ATP6 5'region</fullName>
    </recommendedName>
    <alternativeName>
        <fullName>ORFC</fullName>
    </alternativeName>
</protein>
<geneLocation type="mitochondrion"/>
<accession>P15562</accession>
<evidence type="ECO:0000305" key="1"/>
<reference key="1">
    <citation type="journal article" date="1988" name="J. Mol. Biol.">
        <title>Sequence analysis of mitochondrial DNA from Podospora anserina. Pervasiveness of a class I intron in three separate genes.</title>
        <authorList>
            <person name="Cummings D.J."/>
            <person name="Domenico J.M."/>
        </authorList>
    </citation>
    <scope>NUCLEOTIDE SEQUENCE [GENOMIC DNA]</scope>
    <source>
        <strain>A</strain>
        <strain>s</strain>
    </source>
</reference>
<reference key="2">
    <citation type="journal article" date="1990" name="Curr. Genet.">
        <title>The complete DNA sequence of the mitochondrial genome of Podospora anserina.</title>
        <authorList>
            <person name="Cummings D.J."/>
            <person name="McNally K.L."/>
            <person name="Domenico J.M."/>
            <person name="Matsuura E.T."/>
        </authorList>
    </citation>
    <scope>NUCLEOTIDE SEQUENCE [LARGE SCALE GENOMIC DNA]</scope>
    <source>
        <strain>s</strain>
    </source>
</reference>
<sequence>MNSNYPLFWIKEILTNGFVENILYIFIIMAFLTGIYSIIANLIKFVINYINIKITKIITLIENWLKKSDSSFVYFILLLYLLLNIHISLNFVLYFRIVILGFISIKNMEISTLISFIDYISEIIANIIDRNTLKMGGTDSDSNPLSHVYEFASKSSKPKEVEKAIPNLPENVPKYPGKIVKPVPNNLLEKRGLSSMSVEMPSNTTNPSDIERLNNLLEDIKKSLELYDNQSLKFRKHISEVNNNDPNCVYDPRSKELFKDYIKLVDLLKDQQKDMGNKIINELKNIDPNIKHKYFK</sequence>
<comment type="subcellular location">
    <subcellularLocation>
        <location evidence="1">Mitochondrion</location>
    </subcellularLocation>
</comment>
<feature type="chain" id="PRO_0000196896" description="Uncharacterized 34.3 kDa protein in ATP6 5'region">
    <location>
        <begin position="1"/>
        <end position="296"/>
    </location>
</feature>